<dbReference type="EC" id="1.-.-.-"/>
<dbReference type="EMBL" id="AP004381">
    <property type="protein sequence ID" value="BAD17023.1"/>
    <property type="molecule type" value="Genomic_DNA"/>
</dbReference>
<dbReference type="EMBL" id="AP004381">
    <property type="protein sequence ID" value="BAD17024.1"/>
    <property type="status" value="ALT_SEQ"/>
    <property type="molecule type" value="Genomic_DNA"/>
</dbReference>
<dbReference type="EMBL" id="AP005542">
    <property type="protein sequence ID" value="BAD13197.1"/>
    <property type="molecule type" value="Genomic_DNA"/>
</dbReference>
<dbReference type="EMBL" id="AP005542">
    <property type="protein sequence ID" value="BAD13198.1"/>
    <property type="status" value="ALT_SEQ"/>
    <property type="molecule type" value="Genomic_DNA"/>
</dbReference>
<dbReference type="EMBL" id="AP008214">
    <property type="protein sequence ID" value="BAF22890.1"/>
    <property type="molecule type" value="Genomic_DNA"/>
</dbReference>
<dbReference type="EMBL" id="AP014964">
    <property type="protein sequence ID" value="BAT03801.1"/>
    <property type="molecule type" value="Genomic_DNA"/>
</dbReference>
<dbReference type="EMBL" id="AK120532">
    <property type="protein sequence ID" value="BAH00055.1"/>
    <property type="molecule type" value="mRNA"/>
</dbReference>
<dbReference type="RefSeq" id="XP_015650197.1">
    <property type="nucleotide sequence ID" value="XM_015794711.1"/>
</dbReference>
<dbReference type="SMR" id="Q6YYZ1"/>
<dbReference type="FunCoup" id="Q6YYZ1">
    <property type="interactions" value="2017"/>
</dbReference>
<dbReference type="STRING" id="39947.Q6YYZ1"/>
<dbReference type="PaxDb" id="39947-Q6YYZ1"/>
<dbReference type="EnsemblPlants" id="Os08t0143400-01">
    <property type="protein sequence ID" value="Os08t0143400-01"/>
    <property type="gene ID" value="Os08g0143400"/>
</dbReference>
<dbReference type="Gramene" id="Os08t0143400-01">
    <property type="protein sequence ID" value="Os08t0143400-01"/>
    <property type="gene ID" value="Os08g0143400"/>
</dbReference>
<dbReference type="KEGG" id="dosa:Os08g0143400"/>
<dbReference type="eggNOG" id="KOG0029">
    <property type="taxonomic scope" value="Eukaryota"/>
</dbReference>
<dbReference type="InParanoid" id="Q6YYZ1"/>
<dbReference type="OMA" id="PYVFWGE"/>
<dbReference type="OrthoDB" id="2219495at2759"/>
<dbReference type="Proteomes" id="UP000000763">
    <property type="component" value="Chromosome 8"/>
</dbReference>
<dbReference type="Proteomes" id="UP000059680">
    <property type="component" value="Chromosome 8"/>
</dbReference>
<dbReference type="ExpressionAtlas" id="Q6YYZ1">
    <property type="expression patterns" value="baseline and differential"/>
</dbReference>
<dbReference type="GO" id="GO:0050660">
    <property type="term" value="F:flavin adenine dinucleotide binding"/>
    <property type="evidence" value="ECO:0007669"/>
    <property type="project" value="UniProtKB-ARBA"/>
</dbReference>
<dbReference type="GO" id="GO:0016491">
    <property type="term" value="F:oxidoreductase activity"/>
    <property type="evidence" value="ECO:0000318"/>
    <property type="project" value="GO_Central"/>
</dbReference>
<dbReference type="GO" id="GO:0052901">
    <property type="term" value="F:spermine oxidase activity"/>
    <property type="evidence" value="ECO:0007669"/>
    <property type="project" value="UniProtKB-ARBA"/>
</dbReference>
<dbReference type="GO" id="GO:0006325">
    <property type="term" value="P:chromatin organization"/>
    <property type="evidence" value="ECO:0007669"/>
    <property type="project" value="UniProtKB-KW"/>
</dbReference>
<dbReference type="GO" id="GO:0046208">
    <property type="term" value="P:spermine catabolic process"/>
    <property type="evidence" value="ECO:0007669"/>
    <property type="project" value="UniProtKB-ARBA"/>
</dbReference>
<dbReference type="GO" id="GO:1903602">
    <property type="term" value="P:thermospermine catabolic process"/>
    <property type="evidence" value="ECO:0007669"/>
    <property type="project" value="UniProtKB-ARBA"/>
</dbReference>
<dbReference type="Gene3D" id="3.90.660.10">
    <property type="match status" value="1"/>
</dbReference>
<dbReference type="Gene3D" id="3.50.50.60">
    <property type="entry name" value="FAD/NAD(P)-binding domain"/>
    <property type="match status" value="1"/>
</dbReference>
<dbReference type="Gene3D" id="1.10.10.10">
    <property type="entry name" value="Winged helix-like DNA-binding domain superfamily/Winged helix DNA-binding domain"/>
    <property type="match status" value="1"/>
</dbReference>
<dbReference type="InterPro" id="IPR002937">
    <property type="entry name" value="Amino_oxidase"/>
</dbReference>
<dbReference type="InterPro" id="IPR036188">
    <property type="entry name" value="FAD/NAD-bd_sf"/>
</dbReference>
<dbReference type="InterPro" id="IPR050281">
    <property type="entry name" value="Flavin_monoamine_oxidase"/>
</dbReference>
<dbReference type="InterPro" id="IPR009057">
    <property type="entry name" value="Homeodomain-like_sf"/>
</dbReference>
<dbReference type="InterPro" id="IPR007526">
    <property type="entry name" value="SWIRM"/>
</dbReference>
<dbReference type="InterPro" id="IPR036388">
    <property type="entry name" value="WH-like_DNA-bd_sf"/>
</dbReference>
<dbReference type="PANTHER" id="PTHR10742">
    <property type="entry name" value="FLAVIN MONOAMINE OXIDASE"/>
    <property type="match status" value="1"/>
</dbReference>
<dbReference type="PANTHER" id="PTHR10742:SF373">
    <property type="entry name" value="LYSINE-SPECIFIC HISTONE DEMETHYLASE 1 HOMOLOG 2"/>
    <property type="match status" value="1"/>
</dbReference>
<dbReference type="Pfam" id="PF01593">
    <property type="entry name" value="Amino_oxidase"/>
    <property type="match status" value="1"/>
</dbReference>
<dbReference type="Pfam" id="PF04433">
    <property type="entry name" value="SWIRM"/>
    <property type="match status" value="1"/>
</dbReference>
<dbReference type="SUPFAM" id="SSF54373">
    <property type="entry name" value="FAD-linked reductases, C-terminal domain"/>
    <property type="match status" value="1"/>
</dbReference>
<dbReference type="SUPFAM" id="SSF51905">
    <property type="entry name" value="FAD/NAD(P)-binding domain"/>
    <property type="match status" value="1"/>
</dbReference>
<dbReference type="SUPFAM" id="SSF46689">
    <property type="entry name" value="Homeodomain-like"/>
    <property type="match status" value="1"/>
</dbReference>
<dbReference type="PROSITE" id="PS50934">
    <property type="entry name" value="SWIRM"/>
    <property type="match status" value="1"/>
</dbReference>
<gene>
    <name type="ordered locus">Os08g0143400</name>
    <name type="ordered locus">LOC_Os08g04780</name>
    <name type="ORF">P0025F03.17-1</name>
    <name type="ORF">P0025F03.17-2</name>
    <name type="ORF">P0473D02.39-1</name>
    <name type="ORF">P0473D02.39-2</name>
</gene>
<protein>
    <recommendedName>
        <fullName>Lysine-specific histone demethylase 1 homolog 2</fullName>
        <ecNumber>1.-.-.-</ecNumber>
    </recommendedName>
    <alternativeName>
        <fullName>Flavin-containing amine oxidase domain-containing protein 2</fullName>
    </alternativeName>
    <alternativeName>
        <fullName>Protein LSD1-LIKE 2</fullName>
    </alternativeName>
</protein>
<proteinExistence type="evidence at transcript level"/>
<sequence>MSSSSRRPARRAALTARSSYDESLVDAELESYLGNARSRRISRLRRLSADERQRETETEALIALSLGFPIDELLPAERPLLPAPVAAAPNDYIVVRNHILASWRADPRVPLPRSRVQETVAASYDNLVAVAHGFLAREGHINFGVSAAFPASPPPDAPQRLAASVLVVGAGLAGLAAARQLLRFGLRVLVLEGRARPGGRVYTTHLGGDQAAVELGGSVITGIHTNPLGVLARQLGIPLHKVRDSCPLYHHDGRTVDMKLDRSMDLVFNTLLEHATRLREYLKKAAEGISLGEGIERLRRFYKVAKSVEEREVLDWHLANLEFSNAGCLSELSLAHWDQDDQYEMGGDHCFLAGGNARLVHALCDGVPVLYEKTVKRIEHGEDGVSITVEGGQVFKADMALCTAPLGVLKSRSIIFEPELPERKLEAIQRLGFGLLNKVAMVFPHVFWDEEIDTFGCLNKERSKRGEFFLFYSYHTVSGGAVLIALVAGEAALEFEKVDPAVALHRVLGILKGIYGPKGVTVPDPIQSCCTRWGSDPLCSGSYSHIRVGSSGTDYDILAESVNDRLFFAGEATNRAYPATMHGALLSGLREASKILHASESRLNSDYKKYALQKSIRLINNVLDDLFMEPDLECGRFSFVFSYITPEEEQAPGLARITLEKPLLLPSKKRKVKGNQKDQDPVAEKIDQEVFYLYATVSQEQATELLECDNDKSRIAVLCKDLGVKLMGYDSTYDVCSHLISSISRAQKARKRLQGPKSLKTGL</sequence>
<keyword id="KW-0156">Chromatin regulator</keyword>
<keyword id="KW-0274">FAD</keyword>
<keyword id="KW-0285">Flavoprotein</keyword>
<keyword id="KW-0560">Oxidoreductase</keyword>
<keyword id="KW-1185">Reference proteome</keyword>
<feature type="chain" id="PRO_0000342897" description="Lysine-specific histone demethylase 1 homolog 2">
    <location>
        <begin position="1"/>
        <end position="763"/>
    </location>
</feature>
<feature type="domain" description="SWIRM" evidence="2">
    <location>
        <begin position="53"/>
        <end position="152"/>
    </location>
</feature>
<feature type="binding site" evidence="1">
    <location>
        <position position="192"/>
    </location>
    <ligand>
        <name>FAD</name>
        <dbReference type="ChEBI" id="CHEBI:57692"/>
    </ligand>
</feature>
<feature type="binding site" evidence="1">
    <location>
        <position position="194"/>
    </location>
    <ligand>
        <name>FAD</name>
        <dbReference type="ChEBI" id="CHEBI:57692"/>
    </ligand>
</feature>
<feature type="binding site" evidence="1">
    <location>
        <position position="200"/>
    </location>
    <ligand>
        <name>FAD</name>
        <dbReference type="ChEBI" id="CHEBI:57692"/>
    </ligand>
</feature>
<feature type="binding site" evidence="1">
    <location>
        <position position="571"/>
    </location>
    <ligand>
        <name>FAD</name>
        <dbReference type="ChEBI" id="CHEBI:57692"/>
    </ligand>
</feature>
<organism>
    <name type="scientific">Oryza sativa subsp. japonica</name>
    <name type="common">Rice</name>
    <dbReference type="NCBI Taxonomy" id="39947"/>
    <lineage>
        <taxon>Eukaryota</taxon>
        <taxon>Viridiplantae</taxon>
        <taxon>Streptophyta</taxon>
        <taxon>Embryophyta</taxon>
        <taxon>Tracheophyta</taxon>
        <taxon>Spermatophyta</taxon>
        <taxon>Magnoliopsida</taxon>
        <taxon>Liliopsida</taxon>
        <taxon>Poales</taxon>
        <taxon>Poaceae</taxon>
        <taxon>BOP clade</taxon>
        <taxon>Oryzoideae</taxon>
        <taxon>Oryzeae</taxon>
        <taxon>Oryzinae</taxon>
        <taxon>Oryza</taxon>
        <taxon>Oryza sativa</taxon>
    </lineage>
</organism>
<reference key="1">
    <citation type="journal article" date="2005" name="Nature">
        <title>The map-based sequence of the rice genome.</title>
        <authorList>
            <consortium name="International rice genome sequencing project (IRGSP)"/>
        </authorList>
    </citation>
    <scope>NUCLEOTIDE SEQUENCE [LARGE SCALE GENOMIC DNA]</scope>
    <source>
        <strain>cv. Nipponbare</strain>
    </source>
</reference>
<reference key="2">
    <citation type="journal article" date="2008" name="Nucleic Acids Res.">
        <title>The rice annotation project database (RAP-DB): 2008 update.</title>
        <authorList>
            <consortium name="The rice annotation project (RAP)"/>
        </authorList>
    </citation>
    <scope>GENOME REANNOTATION</scope>
    <source>
        <strain>cv. Nipponbare</strain>
    </source>
</reference>
<reference key="3">
    <citation type="journal article" date="2013" name="Rice">
        <title>Improvement of the Oryza sativa Nipponbare reference genome using next generation sequence and optical map data.</title>
        <authorList>
            <person name="Kawahara Y."/>
            <person name="de la Bastide M."/>
            <person name="Hamilton J.P."/>
            <person name="Kanamori H."/>
            <person name="McCombie W.R."/>
            <person name="Ouyang S."/>
            <person name="Schwartz D.C."/>
            <person name="Tanaka T."/>
            <person name="Wu J."/>
            <person name="Zhou S."/>
            <person name="Childs K.L."/>
            <person name="Davidson R.M."/>
            <person name="Lin H."/>
            <person name="Quesada-Ocampo L."/>
            <person name="Vaillancourt B."/>
            <person name="Sakai H."/>
            <person name="Lee S.S."/>
            <person name="Kim J."/>
            <person name="Numa H."/>
            <person name="Itoh T."/>
            <person name="Buell C.R."/>
            <person name="Matsumoto T."/>
        </authorList>
    </citation>
    <scope>GENOME REANNOTATION</scope>
    <source>
        <strain>cv. Nipponbare</strain>
    </source>
</reference>
<reference key="4">
    <citation type="journal article" date="2003" name="Science">
        <title>Collection, mapping, and annotation of over 28,000 cDNA clones from japonica rice.</title>
        <authorList>
            <consortium name="The rice full-length cDNA consortium"/>
        </authorList>
    </citation>
    <scope>NUCLEOTIDE SEQUENCE [LARGE SCALE MRNA]</scope>
    <source>
        <strain>cv. Nipponbare</strain>
    </source>
</reference>
<accession>Q6YYZ1</accession>
<accession>B7F607</accession>
<accession>Q6YYZ0</accession>
<evidence type="ECO:0000250" key="1"/>
<evidence type="ECO:0000255" key="2">
    <source>
        <dbReference type="PROSITE-ProRule" id="PRU00247"/>
    </source>
</evidence>
<evidence type="ECO:0000305" key="3"/>
<name>LDL2_ORYSJ</name>
<comment type="function">
    <text evidence="1">Probable histone demethylase.</text>
</comment>
<comment type="cofactor">
    <cofactor evidence="3">
        <name>FAD</name>
        <dbReference type="ChEBI" id="CHEBI:57692"/>
    </cofactor>
</comment>
<comment type="similarity">
    <text evidence="3">Belongs to the flavin monoamine oxidase family.</text>
</comment>
<comment type="sequence caution" evidence="3">
    <conflict type="erroneous gene model prediction">
        <sequence resource="EMBL-CDS" id="BAD13198"/>
    </conflict>
</comment>
<comment type="sequence caution" evidence="3">
    <conflict type="erroneous gene model prediction">
        <sequence resource="EMBL-CDS" id="BAD17024"/>
    </conflict>
</comment>